<feature type="chain" id="PRO_0000372761" description="UPF0741 protein SH2399">
    <location>
        <begin position="1"/>
        <end position="113"/>
    </location>
</feature>
<feature type="region of interest" description="Disordered" evidence="2">
    <location>
        <begin position="69"/>
        <end position="113"/>
    </location>
</feature>
<feature type="coiled-coil region" evidence="1">
    <location>
        <begin position="78"/>
        <end position="113"/>
    </location>
</feature>
<feature type="compositionally biased region" description="Basic and acidic residues" evidence="2">
    <location>
        <begin position="74"/>
        <end position="105"/>
    </location>
</feature>
<gene>
    <name type="ordered locus">SH2399</name>
</gene>
<evidence type="ECO:0000255" key="1">
    <source>
        <dbReference type="HAMAP-Rule" id="MF_01863"/>
    </source>
</evidence>
<evidence type="ECO:0000256" key="2">
    <source>
        <dbReference type="SAM" id="MobiDB-lite"/>
    </source>
</evidence>
<accession>Q4L3R9</accession>
<keyword id="KW-0175">Coiled coil</keyword>
<protein>
    <recommendedName>
        <fullName evidence="1">UPF0741 protein SH2399</fullName>
    </recommendedName>
</protein>
<sequence length="113" mass="13424">MKNKFLICDECQAVNIKTLKRKLEKLDPEAEIEIGCQSYCGPGRRKTFAFVNNRPLAALTEDELLEKVTAQLKKPRDPEEEERLRKRNEERKRRKEEQDRKLKEKLAKRKAIK</sequence>
<comment type="similarity">
    <text evidence="1">Belongs to the UPF0741 family.</text>
</comment>
<proteinExistence type="inferred from homology"/>
<reference key="1">
    <citation type="journal article" date="2005" name="J. Bacteriol.">
        <title>Whole-genome sequencing of Staphylococcus haemolyticus uncovers the extreme plasticity of its genome and the evolution of human-colonizing staphylococcal species.</title>
        <authorList>
            <person name="Takeuchi F."/>
            <person name="Watanabe S."/>
            <person name="Baba T."/>
            <person name="Yuzawa H."/>
            <person name="Ito T."/>
            <person name="Morimoto Y."/>
            <person name="Kuroda M."/>
            <person name="Cui L."/>
            <person name="Takahashi M."/>
            <person name="Ankai A."/>
            <person name="Baba S."/>
            <person name="Fukui S."/>
            <person name="Lee J.C."/>
            <person name="Hiramatsu K."/>
        </authorList>
    </citation>
    <scope>NUCLEOTIDE SEQUENCE [LARGE SCALE GENOMIC DNA]</scope>
    <source>
        <strain>JCSC1435</strain>
    </source>
</reference>
<dbReference type="EMBL" id="AP006716">
    <property type="protein sequence ID" value="BAE05708.1"/>
    <property type="molecule type" value="Genomic_DNA"/>
</dbReference>
<dbReference type="RefSeq" id="WP_011276654.1">
    <property type="nucleotide sequence ID" value="NC_007168.1"/>
</dbReference>
<dbReference type="SMR" id="Q4L3R9"/>
<dbReference type="KEGG" id="sha:SH2399"/>
<dbReference type="eggNOG" id="COG4844">
    <property type="taxonomic scope" value="Bacteria"/>
</dbReference>
<dbReference type="HOGENOM" id="CLU_2156795_0_0_9"/>
<dbReference type="OrthoDB" id="1645211at2"/>
<dbReference type="Proteomes" id="UP000000543">
    <property type="component" value="Chromosome"/>
</dbReference>
<dbReference type="HAMAP" id="MF_01863">
    <property type="entry name" value="UPF0741"/>
    <property type="match status" value="1"/>
</dbReference>
<dbReference type="InterPro" id="IPR009910">
    <property type="entry name" value="DUF1450"/>
</dbReference>
<dbReference type="InterPro" id="IPR020880">
    <property type="entry name" value="UPF0741"/>
</dbReference>
<dbReference type="Pfam" id="PF07293">
    <property type="entry name" value="DUF1450"/>
    <property type="match status" value="1"/>
</dbReference>
<organism>
    <name type="scientific">Staphylococcus haemolyticus (strain JCSC1435)</name>
    <dbReference type="NCBI Taxonomy" id="279808"/>
    <lineage>
        <taxon>Bacteria</taxon>
        <taxon>Bacillati</taxon>
        <taxon>Bacillota</taxon>
        <taxon>Bacilli</taxon>
        <taxon>Bacillales</taxon>
        <taxon>Staphylococcaceae</taxon>
        <taxon>Staphylococcus</taxon>
    </lineage>
</organism>
<name>Y2399_STAHJ</name>